<protein>
    <recommendedName>
        <fullName evidence="1">Large ribosomal subunit protein bL28</fullName>
    </recommendedName>
    <alternativeName>
        <fullName evidence="2">50S ribosomal protein L28</fullName>
    </alternativeName>
</protein>
<gene>
    <name evidence="1" type="primary">rpmB</name>
    <name type="ordered locus">lpg0479</name>
</gene>
<keyword id="KW-1185">Reference proteome</keyword>
<keyword id="KW-0687">Ribonucleoprotein</keyword>
<keyword id="KW-0689">Ribosomal protein</keyword>
<accession>Q5ZY93</accession>
<feature type="chain" id="PRO_0000178490" description="Large ribosomal subunit protein bL28">
    <location>
        <begin position="1"/>
        <end position="78"/>
    </location>
</feature>
<comment type="similarity">
    <text evidence="1">Belongs to the bacterial ribosomal protein bL28 family.</text>
</comment>
<organism>
    <name type="scientific">Legionella pneumophila subsp. pneumophila (strain Philadelphia 1 / ATCC 33152 / DSM 7513)</name>
    <dbReference type="NCBI Taxonomy" id="272624"/>
    <lineage>
        <taxon>Bacteria</taxon>
        <taxon>Pseudomonadati</taxon>
        <taxon>Pseudomonadota</taxon>
        <taxon>Gammaproteobacteria</taxon>
        <taxon>Legionellales</taxon>
        <taxon>Legionellaceae</taxon>
        <taxon>Legionella</taxon>
    </lineage>
</organism>
<evidence type="ECO:0000255" key="1">
    <source>
        <dbReference type="HAMAP-Rule" id="MF_00373"/>
    </source>
</evidence>
<evidence type="ECO:0000305" key="2"/>
<reference key="1">
    <citation type="journal article" date="2004" name="Science">
        <title>The genomic sequence of the accidental pathogen Legionella pneumophila.</title>
        <authorList>
            <person name="Chien M."/>
            <person name="Morozova I."/>
            <person name="Shi S."/>
            <person name="Sheng H."/>
            <person name="Chen J."/>
            <person name="Gomez S.M."/>
            <person name="Asamani G."/>
            <person name="Hill K."/>
            <person name="Nuara J."/>
            <person name="Feder M."/>
            <person name="Rineer J."/>
            <person name="Greenberg J.J."/>
            <person name="Steshenko V."/>
            <person name="Park S.H."/>
            <person name="Zhao B."/>
            <person name="Teplitskaya E."/>
            <person name="Edwards J.R."/>
            <person name="Pampou S."/>
            <person name="Georghiou A."/>
            <person name="Chou I.-C."/>
            <person name="Iannuccilli W."/>
            <person name="Ulz M.E."/>
            <person name="Kim D.H."/>
            <person name="Geringer-Sameth A."/>
            <person name="Goldsberry C."/>
            <person name="Morozov P."/>
            <person name="Fischer S.G."/>
            <person name="Segal G."/>
            <person name="Qu X."/>
            <person name="Rzhetsky A."/>
            <person name="Zhang P."/>
            <person name="Cayanis E."/>
            <person name="De Jong P.J."/>
            <person name="Ju J."/>
            <person name="Kalachikov S."/>
            <person name="Shuman H.A."/>
            <person name="Russo J.J."/>
        </authorList>
    </citation>
    <scope>NUCLEOTIDE SEQUENCE [LARGE SCALE GENOMIC DNA]</scope>
    <source>
        <strain>Philadelphia 1 / ATCC 33152 / DSM 7513</strain>
    </source>
</reference>
<sequence length="78" mass="9084">MSRVCQVTGKRPMVGHKVSHANNKTKRRFLPNIQNHKFWVEEENRFVTLRLSTKGMRIIDKLGIKAVLDKIRAKGEKI</sequence>
<proteinExistence type="inferred from homology"/>
<name>RL28_LEGPH</name>
<dbReference type="EMBL" id="AE017354">
    <property type="protein sequence ID" value="AAU26576.1"/>
    <property type="molecule type" value="Genomic_DNA"/>
</dbReference>
<dbReference type="RefSeq" id="WP_010946227.1">
    <property type="nucleotide sequence ID" value="NC_002942.5"/>
</dbReference>
<dbReference type="RefSeq" id="YP_094523.1">
    <property type="nucleotide sequence ID" value="NC_002942.5"/>
</dbReference>
<dbReference type="SMR" id="Q5ZY93"/>
<dbReference type="STRING" id="272624.lpg0479"/>
<dbReference type="PaxDb" id="272624-lpg0479"/>
<dbReference type="GeneID" id="57034480"/>
<dbReference type="KEGG" id="lpn:lpg0479"/>
<dbReference type="PATRIC" id="fig|272624.6.peg.499"/>
<dbReference type="eggNOG" id="COG0227">
    <property type="taxonomic scope" value="Bacteria"/>
</dbReference>
<dbReference type="HOGENOM" id="CLU_064548_3_1_6"/>
<dbReference type="OrthoDB" id="9805609at2"/>
<dbReference type="Proteomes" id="UP000000609">
    <property type="component" value="Chromosome"/>
</dbReference>
<dbReference type="GO" id="GO:0022625">
    <property type="term" value="C:cytosolic large ribosomal subunit"/>
    <property type="evidence" value="ECO:0007669"/>
    <property type="project" value="TreeGrafter"/>
</dbReference>
<dbReference type="GO" id="GO:0003735">
    <property type="term" value="F:structural constituent of ribosome"/>
    <property type="evidence" value="ECO:0007669"/>
    <property type="project" value="InterPro"/>
</dbReference>
<dbReference type="GO" id="GO:0006412">
    <property type="term" value="P:translation"/>
    <property type="evidence" value="ECO:0007669"/>
    <property type="project" value="UniProtKB-UniRule"/>
</dbReference>
<dbReference type="FunFam" id="2.30.170.40:FF:000001">
    <property type="entry name" value="50S ribosomal protein L28"/>
    <property type="match status" value="1"/>
</dbReference>
<dbReference type="Gene3D" id="2.30.170.40">
    <property type="entry name" value="Ribosomal protein L28/L24"/>
    <property type="match status" value="1"/>
</dbReference>
<dbReference type="HAMAP" id="MF_00373">
    <property type="entry name" value="Ribosomal_bL28"/>
    <property type="match status" value="1"/>
</dbReference>
<dbReference type="InterPro" id="IPR026569">
    <property type="entry name" value="Ribosomal_bL28"/>
</dbReference>
<dbReference type="InterPro" id="IPR034704">
    <property type="entry name" value="Ribosomal_bL28/bL31-like_sf"/>
</dbReference>
<dbReference type="InterPro" id="IPR001383">
    <property type="entry name" value="Ribosomal_bL28_bact-type"/>
</dbReference>
<dbReference type="InterPro" id="IPR037147">
    <property type="entry name" value="Ribosomal_bL28_sf"/>
</dbReference>
<dbReference type="NCBIfam" id="TIGR00009">
    <property type="entry name" value="L28"/>
    <property type="match status" value="1"/>
</dbReference>
<dbReference type="PANTHER" id="PTHR13528">
    <property type="entry name" value="39S RIBOSOMAL PROTEIN L28, MITOCHONDRIAL"/>
    <property type="match status" value="1"/>
</dbReference>
<dbReference type="PANTHER" id="PTHR13528:SF2">
    <property type="entry name" value="LARGE RIBOSOMAL SUBUNIT PROTEIN BL28M"/>
    <property type="match status" value="1"/>
</dbReference>
<dbReference type="Pfam" id="PF00830">
    <property type="entry name" value="Ribosomal_L28"/>
    <property type="match status" value="1"/>
</dbReference>
<dbReference type="SUPFAM" id="SSF143800">
    <property type="entry name" value="L28p-like"/>
    <property type="match status" value="1"/>
</dbReference>